<proteinExistence type="inferred from homology"/>
<gene>
    <name evidence="1" type="primary">rlmE</name>
    <name evidence="1" type="synonym">ftsJ</name>
    <name evidence="1" type="synonym">rrmJ</name>
    <name type="ordered locus">BCc_236</name>
</gene>
<comment type="function">
    <text evidence="1">Specifically methylates the uridine in position 2552 of 23S rRNA at the 2'-O position of the ribose in the fully assembled 50S ribosomal subunit.</text>
</comment>
<comment type="catalytic activity">
    <reaction evidence="1">
        <text>uridine(2552) in 23S rRNA + S-adenosyl-L-methionine = 2'-O-methyluridine(2552) in 23S rRNA + S-adenosyl-L-homocysteine + H(+)</text>
        <dbReference type="Rhea" id="RHEA:42720"/>
        <dbReference type="Rhea" id="RHEA-COMP:10202"/>
        <dbReference type="Rhea" id="RHEA-COMP:10203"/>
        <dbReference type="ChEBI" id="CHEBI:15378"/>
        <dbReference type="ChEBI" id="CHEBI:57856"/>
        <dbReference type="ChEBI" id="CHEBI:59789"/>
        <dbReference type="ChEBI" id="CHEBI:65315"/>
        <dbReference type="ChEBI" id="CHEBI:74478"/>
        <dbReference type="EC" id="2.1.1.166"/>
    </reaction>
</comment>
<comment type="subcellular location">
    <subcellularLocation>
        <location evidence="1">Cytoplasm</location>
    </subcellularLocation>
</comment>
<comment type="similarity">
    <text evidence="1">Belongs to the class I-like SAM-binding methyltransferase superfamily. RNA methyltransferase RlmE family.</text>
</comment>
<organism>
    <name type="scientific">Buchnera aphidicola subsp. Cinara cedri (strain Cc)</name>
    <dbReference type="NCBI Taxonomy" id="372461"/>
    <lineage>
        <taxon>Bacteria</taxon>
        <taxon>Pseudomonadati</taxon>
        <taxon>Pseudomonadota</taxon>
        <taxon>Gammaproteobacteria</taxon>
        <taxon>Enterobacterales</taxon>
        <taxon>Erwiniaceae</taxon>
        <taxon>Buchnera</taxon>
    </lineage>
</organism>
<accession>Q057J5</accession>
<protein>
    <recommendedName>
        <fullName evidence="1">Ribosomal RNA large subunit methyltransferase E</fullName>
        <ecNumber evidence="1">2.1.1.166</ecNumber>
    </recommendedName>
    <alternativeName>
        <fullName evidence="1">23S rRNA Um2552 methyltransferase</fullName>
    </alternativeName>
    <alternativeName>
        <fullName evidence="1">rRNA (uridine-2'-O-)-methyltransferase</fullName>
    </alternativeName>
</protein>
<keyword id="KW-0963">Cytoplasm</keyword>
<keyword id="KW-0489">Methyltransferase</keyword>
<keyword id="KW-1185">Reference proteome</keyword>
<keyword id="KW-0698">rRNA processing</keyword>
<keyword id="KW-0949">S-adenosyl-L-methionine</keyword>
<keyword id="KW-0808">Transferase</keyword>
<sequence length="209" mass="24507">MILKKRSKSSKNWLKRNFNDPYIKERNKKKLRSRSWFKLKEIDESEKIFKKGMNVIDLGSNPGGWSEYTLKKIGKSGKIFACDILPMRFLKDIVFFCGDISNSDFLKKIFLFLDKYSWNVVMSDISPNICGYSVIDNSNMFKLSNIVLKISRHVLSNNGYLIIKLFQGYGFNKYMKKIRNIFELVKIYKPNASRVNSREVFIIAYGCKK</sequence>
<dbReference type="EC" id="2.1.1.166" evidence="1"/>
<dbReference type="EMBL" id="CP000263">
    <property type="protein sequence ID" value="ABJ90704.1"/>
    <property type="molecule type" value="Genomic_DNA"/>
</dbReference>
<dbReference type="RefSeq" id="WP_011672623.1">
    <property type="nucleotide sequence ID" value="NC_008513.1"/>
</dbReference>
<dbReference type="SMR" id="Q057J5"/>
<dbReference type="STRING" id="372461.BCc_236"/>
<dbReference type="KEGG" id="bcc:BCc_236"/>
<dbReference type="eggNOG" id="COG0293">
    <property type="taxonomic scope" value="Bacteria"/>
</dbReference>
<dbReference type="HOGENOM" id="CLU_009422_4_4_6"/>
<dbReference type="OrthoDB" id="9790080at2"/>
<dbReference type="Proteomes" id="UP000000669">
    <property type="component" value="Chromosome"/>
</dbReference>
<dbReference type="GO" id="GO:0005737">
    <property type="term" value="C:cytoplasm"/>
    <property type="evidence" value="ECO:0007669"/>
    <property type="project" value="UniProtKB-SubCell"/>
</dbReference>
<dbReference type="GO" id="GO:0008650">
    <property type="term" value="F:rRNA (uridine-2'-O-)-methyltransferase activity"/>
    <property type="evidence" value="ECO:0007669"/>
    <property type="project" value="UniProtKB-UniRule"/>
</dbReference>
<dbReference type="Gene3D" id="3.40.50.150">
    <property type="entry name" value="Vaccinia Virus protein VP39"/>
    <property type="match status" value="1"/>
</dbReference>
<dbReference type="HAMAP" id="MF_01547">
    <property type="entry name" value="RNA_methyltr_E"/>
    <property type="match status" value="1"/>
</dbReference>
<dbReference type="InterPro" id="IPR050082">
    <property type="entry name" value="RNA_methyltr_RlmE"/>
</dbReference>
<dbReference type="InterPro" id="IPR002877">
    <property type="entry name" value="RNA_MeTrfase_FtsJ_dom"/>
</dbReference>
<dbReference type="InterPro" id="IPR015507">
    <property type="entry name" value="rRNA-MeTfrase_E"/>
</dbReference>
<dbReference type="InterPro" id="IPR029063">
    <property type="entry name" value="SAM-dependent_MTases_sf"/>
</dbReference>
<dbReference type="PANTHER" id="PTHR10920">
    <property type="entry name" value="RIBOSOMAL RNA METHYLTRANSFERASE"/>
    <property type="match status" value="1"/>
</dbReference>
<dbReference type="PANTHER" id="PTHR10920:SF18">
    <property type="entry name" value="RRNA METHYLTRANSFERASE 2, MITOCHONDRIAL"/>
    <property type="match status" value="1"/>
</dbReference>
<dbReference type="Pfam" id="PF01728">
    <property type="entry name" value="FtsJ"/>
    <property type="match status" value="1"/>
</dbReference>
<dbReference type="PIRSF" id="PIRSF005461">
    <property type="entry name" value="23S_rRNA_mtase"/>
    <property type="match status" value="1"/>
</dbReference>
<dbReference type="SUPFAM" id="SSF53335">
    <property type="entry name" value="S-adenosyl-L-methionine-dependent methyltransferases"/>
    <property type="match status" value="1"/>
</dbReference>
<reference key="1">
    <citation type="journal article" date="2006" name="Science">
        <title>A small microbial genome: the end of a long symbiotic relationship?</title>
        <authorList>
            <person name="Perez-Brocal V."/>
            <person name="Gil R."/>
            <person name="Ramos S."/>
            <person name="Lamelas A."/>
            <person name="Postigo M."/>
            <person name="Michelena J.M."/>
            <person name="Silva F.J."/>
            <person name="Moya A."/>
            <person name="Latorre A."/>
        </authorList>
    </citation>
    <scope>NUCLEOTIDE SEQUENCE [LARGE SCALE GENOMIC DNA]</scope>
    <source>
        <strain>Cc</strain>
    </source>
</reference>
<name>RLME_BUCCC</name>
<feature type="chain" id="PRO_0000282731" description="Ribosomal RNA large subunit methyltransferase E">
    <location>
        <begin position="1"/>
        <end position="209"/>
    </location>
</feature>
<feature type="active site" description="Proton acceptor" evidence="1">
    <location>
        <position position="164"/>
    </location>
</feature>
<feature type="binding site" evidence="1">
    <location>
        <position position="63"/>
    </location>
    <ligand>
        <name>S-adenosyl-L-methionine</name>
        <dbReference type="ChEBI" id="CHEBI:59789"/>
    </ligand>
</feature>
<feature type="binding site" evidence="1">
    <location>
        <position position="65"/>
    </location>
    <ligand>
        <name>S-adenosyl-L-methionine</name>
        <dbReference type="ChEBI" id="CHEBI:59789"/>
    </ligand>
</feature>
<feature type="binding site" evidence="1">
    <location>
        <position position="83"/>
    </location>
    <ligand>
        <name>S-adenosyl-L-methionine</name>
        <dbReference type="ChEBI" id="CHEBI:59789"/>
    </ligand>
</feature>
<feature type="binding site" evidence="1">
    <location>
        <position position="99"/>
    </location>
    <ligand>
        <name>S-adenosyl-L-methionine</name>
        <dbReference type="ChEBI" id="CHEBI:59789"/>
    </ligand>
</feature>
<feature type="binding site" evidence="1">
    <location>
        <position position="124"/>
    </location>
    <ligand>
        <name>S-adenosyl-L-methionine</name>
        <dbReference type="ChEBI" id="CHEBI:59789"/>
    </ligand>
</feature>
<evidence type="ECO:0000255" key="1">
    <source>
        <dbReference type="HAMAP-Rule" id="MF_01547"/>
    </source>
</evidence>